<sequence>MTPMYPELLTDLVTDLPHAVRLQRLVSGLRTHFRCGAVALLRLEEEHLRPVAVDGLVRDTLGRRFAVSLHPRLAAILARRDVTCFHHDSMLPDPYDGLIDEHVGEPLPVHDCMGTSLHLDGRPWGVLTLDALTVGTFDAAAQAELQRLTVIVEAAIRTTRLEAEIRALQLARGKQPDGEGPADDGEIIGQSQAIAGLLHELEVVADTDLPVLLLGETGVGKELFAHRLHRHSRRRGHPLVHVNCAALPESLAESELFGHARGAFSGATGERPGRFEAAAGGTLFLDEVGELPLSIQAKLLRTLQNGEIQRLGSDRPRRVNVRVIAATNRNLREHVRDGSFRADLFHRLSVYPIPIPPLRERGNDVLLLAGRFLELNRARLGMRSLRLSAAAQDALRRYRWPGNVRELEHVISRAALRCVSRGADRNDIVTLEAELLDLDGLELPAGSAHHAAEAAIAHPALPTGATLREAVEQTQRACIEQALRAHDGSWAKAARQLGMDASNLHKLAKRLGSK</sequence>
<name>NORR1_CUPNH</name>
<protein>
    <recommendedName>
        <fullName>Nitric oxide reductase transcription regulator NorR1</fullName>
    </recommendedName>
</protein>
<geneLocation type="plasmid">
    <name>megaplasmid pHG1</name>
</geneLocation>
<reference key="1">
    <citation type="journal article" date="2000" name="Mol. Microbiol.">
        <title>A novel NO-responding regulator controls the reduction of nitric oxide in Ralstonia eutropha.</title>
        <authorList>
            <person name="Pohlmann A."/>
            <person name="Cramm R."/>
            <person name="Schmelz K."/>
            <person name="Friedrich B."/>
        </authorList>
    </citation>
    <scope>NUCLEOTIDE SEQUENCE [GENOMIC DNA]</scope>
</reference>
<reference key="2">
    <citation type="journal article" date="2003" name="J. Mol. Biol.">
        <title>Complete nucleotide sequence of pHG1: a Ralstonia eutropha H16 megaplasmid encoding key enzymes of H(2)-based lithoautotrophy and anaerobiosis.</title>
        <authorList>
            <person name="Schwartz E."/>
            <person name="Henne A."/>
            <person name="Cramm R."/>
            <person name="Eitinger T."/>
            <person name="Friedrich B."/>
            <person name="Gottschalk G."/>
        </authorList>
    </citation>
    <scope>NUCLEOTIDE SEQUENCE [LARGE SCALE GENOMIC DNA]</scope>
    <source>
        <strain>ATCC 17699 / DSM 428 / KCTC 22496 / NCIMB 10442 / H16 / Stanier 337</strain>
    </source>
</reference>
<comment type="function">
    <text>Required for the nitric oxide (NO) induced expression of NO reductase. Not required for expression of 2 other pathway members, nitrate reductase (nirS) and nitrous oxide reductase (nosZ).</text>
</comment>
<comment type="pathway">
    <text>Nitrogen metabolism; nitrate reduction (denitrification) [regulation].</text>
</comment>
<comment type="induction">
    <text>Negatively autoregulated; induced by anaerobic growth in the presence of NO.</text>
</comment>
<comment type="domain">
    <text>Deletion of amino acids 23-168 led to effector-independent expression of NorB1, a downstream gene, i.e. the need for an NO-induced signal has been bypassed.</text>
</comment>
<comment type="miscellaneous">
    <text>There are two very similar, functionally redundant regulators in this bacterium, NorR1 and NorR2.</text>
</comment>
<feature type="chain" id="PRO_0000081161" description="Nitric oxide reductase transcription regulator NorR1">
    <location>
        <begin position="1"/>
        <end position="514"/>
    </location>
</feature>
<feature type="domain" description="Sigma-54 factor interaction" evidence="2">
    <location>
        <begin position="187"/>
        <end position="416"/>
    </location>
</feature>
<feature type="DNA-binding region" description="H-T-H motif" evidence="1">
    <location>
        <begin position="490"/>
        <end position="509"/>
    </location>
</feature>
<feature type="binding site" evidence="2">
    <location>
        <begin position="215"/>
        <end position="222"/>
    </location>
    <ligand>
        <name>ATP</name>
        <dbReference type="ChEBI" id="CHEBI:30616"/>
    </ligand>
</feature>
<feature type="binding site" evidence="2">
    <location>
        <begin position="287"/>
        <end position="296"/>
    </location>
    <ligand>
        <name>ATP</name>
        <dbReference type="ChEBI" id="CHEBI:30616"/>
    </ligand>
</feature>
<feature type="modified residue" description="4-aspartylphosphate" evidence="1">
    <location>
        <position position="54"/>
    </location>
</feature>
<feature type="sequence conflict" description="In Ref. 1; CAC00710." evidence="3" ref="1">
    <original>RLAA</original>
    <variation>LACR</variation>
    <location>
        <begin position="72"/>
        <end position="75"/>
    </location>
</feature>
<feature type="sequence conflict" description="In Ref. 1; CAC00710." evidence="3" ref="1">
    <original>A</original>
    <variation>R</variation>
    <location>
        <position position="277"/>
    </location>
</feature>
<feature type="sequence conflict" description="In Ref. 1; CAC00710." evidence="3" ref="1">
    <original>L</original>
    <variation>V</variation>
    <location>
        <position position="300"/>
    </location>
</feature>
<feature type="sequence conflict" description="In Ref. 1; CAC00710." evidence="3" ref="1">
    <original>RLSAAAQDALR</original>
    <variation>PVGRRAGRGV</variation>
    <location>
        <begin position="386"/>
        <end position="396"/>
    </location>
</feature>
<feature type="sequence conflict" description="In Ref. 1; CAC00710." evidence="3" ref="1">
    <original>VIS</original>
    <variation>GDQPR</variation>
    <location>
        <begin position="410"/>
        <end position="412"/>
    </location>
</feature>
<feature type="sequence conflict" description="In Ref. 1; CAC00710." evidence="3" ref="1">
    <original>CVS</original>
    <variation>E</variation>
    <location>
        <begin position="418"/>
        <end position="420"/>
    </location>
</feature>
<feature type="sequence conflict" description="In Ref. 1; CAC00710." evidence="3" ref="1">
    <original>AL</original>
    <variation>GV</variation>
    <location>
        <begin position="482"/>
        <end position="483"/>
    </location>
</feature>
<feature type="sequence conflict" description="In Ref. 1; CAC00710." evidence="3" ref="1">
    <original>KR</original>
    <variation>NG</variation>
    <location>
        <begin position="509"/>
        <end position="510"/>
    </location>
</feature>
<gene>
    <name type="primary">norR1</name>
    <name type="ordered locus">PHG246</name>
</gene>
<evidence type="ECO:0000250" key="1"/>
<evidence type="ECO:0000255" key="2">
    <source>
        <dbReference type="PROSITE-ProRule" id="PRU00193"/>
    </source>
</evidence>
<evidence type="ECO:0000305" key="3"/>
<accession>Q9K4V0</accession>
<accession>Q7WX95</accession>
<keyword id="KW-0067">ATP-binding</keyword>
<keyword id="KW-0238">DNA-binding</keyword>
<keyword id="KW-0547">Nucleotide-binding</keyword>
<keyword id="KW-0597">Phosphoprotein</keyword>
<keyword id="KW-0614">Plasmid</keyword>
<keyword id="KW-1185">Reference proteome</keyword>
<keyword id="KW-0804">Transcription</keyword>
<keyword id="KW-0805">Transcription regulation</keyword>
<keyword id="KW-0902">Two-component regulatory system</keyword>
<dbReference type="EMBL" id="AJ278371">
    <property type="protein sequence ID" value="CAC00710.1"/>
    <property type="molecule type" value="Genomic_DNA"/>
</dbReference>
<dbReference type="EMBL" id="AY305378">
    <property type="protein sequence ID" value="AAP85995.1"/>
    <property type="molecule type" value="Genomic_DNA"/>
</dbReference>
<dbReference type="SMR" id="Q9K4V0"/>
<dbReference type="KEGG" id="reh:PHG246"/>
<dbReference type="eggNOG" id="COG3604">
    <property type="taxonomic scope" value="Bacteria"/>
</dbReference>
<dbReference type="HOGENOM" id="CLU_000445_125_1_4"/>
<dbReference type="UniPathway" id="UPA00652"/>
<dbReference type="Proteomes" id="UP000008210">
    <property type="component" value="Plasmid megaplasmid pHG1"/>
</dbReference>
<dbReference type="GO" id="GO:0005524">
    <property type="term" value="F:ATP binding"/>
    <property type="evidence" value="ECO:0007669"/>
    <property type="project" value="UniProtKB-KW"/>
</dbReference>
<dbReference type="GO" id="GO:0016887">
    <property type="term" value="F:ATP hydrolysis activity"/>
    <property type="evidence" value="ECO:0007669"/>
    <property type="project" value="InterPro"/>
</dbReference>
<dbReference type="GO" id="GO:0043565">
    <property type="term" value="F:sequence-specific DNA binding"/>
    <property type="evidence" value="ECO:0007669"/>
    <property type="project" value="InterPro"/>
</dbReference>
<dbReference type="GO" id="GO:0019333">
    <property type="term" value="P:denitrification pathway"/>
    <property type="evidence" value="ECO:0007669"/>
    <property type="project" value="UniProtKB-UniPathway"/>
</dbReference>
<dbReference type="GO" id="GO:0000160">
    <property type="term" value="P:phosphorelay signal transduction system"/>
    <property type="evidence" value="ECO:0007669"/>
    <property type="project" value="UniProtKB-KW"/>
</dbReference>
<dbReference type="GO" id="GO:0006355">
    <property type="term" value="P:regulation of DNA-templated transcription"/>
    <property type="evidence" value="ECO:0007669"/>
    <property type="project" value="InterPro"/>
</dbReference>
<dbReference type="CDD" id="cd00009">
    <property type="entry name" value="AAA"/>
    <property type="match status" value="1"/>
</dbReference>
<dbReference type="FunFam" id="3.40.50.300:FF:000006">
    <property type="entry name" value="DNA-binding transcriptional regulator NtrC"/>
    <property type="match status" value="1"/>
</dbReference>
<dbReference type="Gene3D" id="1.10.8.60">
    <property type="match status" value="1"/>
</dbReference>
<dbReference type="Gene3D" id="3.30.450.40">
    <property type="match status" value="1"/>
</dbReference>
<dbReference type="Gene3D" id="1.10.10.60">
    <property type="entry name" value="Homeodomain-like"/>
    <property type="match status" value="1"/>
</dbReference>
<dbReference type="Gene3D" id="3.40.50.300">
    <property type="entry name" value="P-loop containing nucleotide triphosphate hydrolases"/>
    <property type="match status" value="1"/>
</dbReference>
<dbReference type="InterPro" id="IPR003593">
    <property type="entry name" value="AAA+_ATPase"/>
</dbReference>
<dbReference type="InterPro" id="IPR003018">
    <property type="entry name" value="GAF"/>
</dbReference>
<dbReference type="InterPro" id="IPR029016">
    <property type="entry name" value="GAF-like_dom_sf"/>
</dbReference>
<dbReference type="InterPro" id="IPR009057">
    <property type="entry name" value="Homeodomain-like_sf"/>
</dbReference>
<dbReference type="InterPro" id="IPR002197">
    <property type="entry name" value="HTH_Fis"/>
</dbReference>
<dbReference type="InterPro" id="IPR027417">
    <property type="entry name" value="P-loop_NTPase"/>
</dbReference>
<dbReference type="InterPro" id="IPR002078">
    <property type="entry name" value="Sigma_54_int"/>
</dbReference>
<dbReference type="InterPro" id="IPR025662">
    <property type="entry name" value="Sigma_54_int_dom_ATP-bd_1"/>
</dbReference>
<dbReference type="InterPro" id="IPR025943">
    <property type="entry name" value="Sigma_54_int_dom_ATP-bd_2"/>
</dbReference>
<dbReference type="InterPro" id="IPR025944">
    <property type="entry name" value="Sigma_54_int_dom_CS"/>
</dbReference>
<dbReference type="NCBIfam" id="NF003451">
    <property type="entry name" value="PRK05022.1"/>
    <property type="match status" value="1"/>
</dbReference>
<dbReference type="PANTHER" id="PTHR32071:SF35">
    <property type="entry name" value="ANAEROBIC NITRIC OXIDE REDUCTASE TRANSCRIPTION REGULATOR NORR"/>
    <property type="match status" value="1"/>
</dbReference>
<dbReference type="PANTHER" id="PTHR32071">
    <property type="entry name" value="TRANSCRIPTIONAL REGULATORY PROTEIN"/>
    <property type="match status" value="1"/>
</dbReference>
<dbReference type="Pfam" id="PF01590">
    <property type="entry name" value="GAF"/>
    <property type="match status" value="1"/>
</dbReference>
<dbReference type="Pfam" id="PF02954">
    <property type="entry name" value="HTH_8"/>
    <property type="match status" value="1"/>
</dbReference>
<dbReference type="Pfam" id="PF00158">
    <property type="entry name" value="Sigma54_activat"/>
    <property type="match status" value="1"/>
</dbReference>
<dbReference type="SMART" id="SM00382">
    <property type="entry name" value="AAA"/>
    <property type="match status" value="1"/>
</dbReference>
<dbReference type="SMART" id="SM00065">
    <property type="entry name" value="GAF"/>
    <property type="match status" value="1"/>
</dbReference>
<dbReference type="SUPFAM" id="SSF55781">
    <property type="entry name" value="GAF domain-like"/>
    <property type="match status" value="1"/>
</dbReference>
<dbReference type="SUPFAM" id="SSF46689">
    <property type="entry name" value="Homeodomain-like"/>
    <property type="match status" value="1"/>
</dbReference>
<dbReference type="SUPFAM" id="SSF52540">
    <property type="entry name" value="P-loop containing nucleoside triphosphate hydrolases"/>
    <property type="match status" value="1"/>
</dbReference>
<dbReference type="PROSITE" id="PS00675">
    <property type="entry name" value="SIGMA54_INTERACT_1"/>
    <property type="match status" value="1"/>
</dbReference>
<dbReference type="PROSITE" id="PS00676">
    <property type="entry name" value="SIGMA54_INTERACT_2"/>
    <property type="match status" value="1"/>
</dbReference>
<dbReference type="PROSITE" id="PS00688">
    <property type="entry name" value="SIGMA54_INTERACT_3"/>
    <property type="match status" value="1"/>
</dbReference>
<dbReference type="PROSITE" id="PS50045">
    <property type="entry name" value="SIGMA54_INTERACT_4"/>
    <property type="match status" value="1"/>
</dbReference>
<organism>
    <name type="scientific">Cupriavidus necator (strain ATCC 17699 / DSM 428 / KCTC 22496 / NCIMB 10442 / H16 / Stanier 337)</name>
    <name type="common">Ralstonia eutropha</name>
    <dbReference type="NCBI Taxonomy" id="381666"/>
    <lineage>
        <taxon>Bacteria</taxon>
        <taxon>Pseudomonadati</taxon>
        <taxon>Pseudomonadota</taxon>
        <taxon>Betaproteobacteria</taxon>
        <taxon>Burkholderiales</taxon>
        <taxon>Burkholderiaceae</taxon>
        <taxon>Cupriavidus</taxon>
    </lineage>
</organism>
<proteinExistence type="evidence at transcript level"/>